<reference key="1">
    <citation type="submission" date="2007-06" db="EMBL/GenBank/DDBJ databases">
        <authorList>
            <person name="Dodson R.J."/>
            <person name="Harkins D."/>
            <person name="Paulsen I.T."/>
        </authorList>
    </citation>
    <scope>NUCLEOTIDE SEQUENCE [LARGE SCALE GENOMIC DNA]</scope>
    <source>
        <strain>DSM 24068 / PA7</strain>
    </source>
</reference>
<protein>
    <recommendedName>
        <fullName evidence="1">tRNA (guanine-N(1)-)-methyltransferase</fullName>
        <ecNumber evidence="1">2.1.1.228</ecNumber>
    </recommendedName>
    <alternativeName>
        <fullName evidence="1">M1G-methyltransferase</fullName>
    </alternativeName>
    <alternativeName>
        <fullName evidence="1">tRNA [GM37] methyltransferase</fullName>
    </alternativeName>
</protein>
<proteinExistence type="inferred from homology"/>
<organism>
    <name type="scientific">Pseudomonas paraeruginosa (strain DSM 24068 / PA7)</name>
    <name type="common">Pseudomonas aeruginosa (strain PA7)</name>
    <dbReference type="NCBI Taxonomy" id="381754"/>
    <lineage>
        <taxon>Bacteria</taxon>
        <taxon>Pseudomonadati</taxon>
        <taxon>Pseudomonadota</taxon>
        <taxon>Gammaproteobacteria</taxon>
        <taxon>Pseudomonadales</taxon>
        <taxon>Pseudomonadaceae</taxon>
        <taxon>Pseudomonas</taxon>
        <taxon>Pseudomonas paraeruginosa</taxon>
    </lineage>
</organism>
<gene>
    <name evidence="1" type="primary">trmD</name>
    <name type="ordered locus">PSPA7_1376</name>
</gene>
<evidence type="ECO:0000255" key="1">
    <source>
        <dbReference type="HAMAP-Rule" id="MF_00605"/>
    </source>
</evidence>
<dbReference type="EC" id="2.1.1.228" evidence="1"/>
<dbReference type="EMBL" id="CP000744">
    <property type="protein sequence ID" value="ABR81892.1"/>
    <property type="molecule type" value="Genomic_DNA"/>
</dbReference>
<dbReference type="RefSeq" id="WP_003119312.1">
    <property type="nucleotide sequence ID" value="NC_009656.1"/>
</dbReference>
<dbReference type="SMR" id="A6V125"/>
<dbReference type="GeneID" id="77219763"/>
<dbReference type="KEGG" id="pap:PSPA7_1376"/>
<dbReference type="HOGENOM" id="CLU_047363_0_1_6"/>
<dbReference type="Proteomes" id="UP000001582">
    <property type="component" value="Chromosome"/>
</dbReference>
<dbReference type="GO" id="GO:0005829">
    <property type="term" value="C:cytosol"/>
    <property type="evidence" value="ECO:0007669"/>
    <property type="project" value="TreeGrafter"/>
</dbReference>
<dbReference type="GO" id="GO:0052906">
    <property type="term" value="F:tRNA (guanine(37)-N1)-methyltransferase activity"/>
    <property type="evidence" value="ECO:0007669"/>
    <property type="project" value="UniProtKB-UniRule"/>
</dbReference>
<dbReference type="GO" id="GO:0002939">
    <property type="term" value="P:tRNA N1-guanine methylation"/>
    <property type="evidence" value="ECO:0007669"/>
    <property type="project" value="TreeGrafter"/>
</dbReference>
<dbReference type="CDD" id="cd18080">
    <property type="entry name" value="TrmD-like"/>
    <property type="match status" value="1"/>
</dbReference>
<dbReference type="FunFam" id="1.10.1270.20:FF:000001">
    <property type="entry name" value="tRNA (guanine-N(1)-)-methyltransferase"/>
    <property type="match status" value="1"/>
</dbReference>
<dbReference type="FunFam" id="3.40.1280.10:FF:000001">
    <property type="entry name" value="tRNA (guanine-N(1)-)-methyltransferase"/>
    <property type="match status" value="1"/>
</dbReference>
<dbReference type="Gene3D" id="3.40.1280.10">
    <property type="match status" value="1"/>
</dbReference>
<dbReference type="Gene3D" id="1.10.1270.20">
    <property type="entry name" value="tRNA(m1g37)methyltransferase, domain 2"/>
    <property type="match status" value="1"/>
</dbReference>
<dbReference type="HAMAP" id="MF_00605">
    <property type="entry name" value="TrmD"/>
    <property type="match status" value="1"/>
</dbReference>
<dbReference type="InterPro" id="IPR029028">
    <property type="entry name" value="Alpha/beta_knot_MTases"/>
</dbReference>
<dbReference type="InterPro" id="IPR023148">
    <property type="entry name" value="tRNA_m1G_MeTrfase_C_sf"/>
</dbReference>
<dbReference type="InterPro" id="IPR002649">
    <property type="entry name" value="tRNA_m1G_MeTrfase_TrmD"/>
</dbReference>
<dbReference type="InterPro" id="IPR029026">
    <property type="entry name" value="tRNA_m1G_MTases_N"/>
</dbReference>
<dbReference type="InterPro" id="IPR016009">
    <property type="entry name" value="tRNA_MeTrfase_TRMD/TRM10"/>
</dbReference>
<dbReference type="NCBIfam" id="NF000648">
    <property type="entry name" value="PRK00026.1"/>
    <property type="match status" value="1"/>
</dbReference>
<dbReference type="NCBIfam" id="TIGR00088">
    <property type="entry name" value="trmD"/>
    <property type="match status" value="1"/>
</dbReference>
<dbReference type="PANTHER" id="PTHR46417">
    <property type="entry name" value="TRNA (GUANINE-N(1)-)-METHYLTRANSFERASE"/>
    <property type="match status" value="1"/>
</dbReference>
<dbReference type="PANTHER" id="PTHR46417:SF1">
    <property type="entry name" value="TRNA (GUANINE-N(1)-)-METHYLTRANSFERASE"/>
    <property type="match status" value="1"/>
</dbReference>
<dbReference type="Pfam" id="PF01746">
    <property type="entry name" value="tRNA_m1G_MT"/>
    <property type="match status" value="1"/>
</dbReference>
<dbReference type="PIRSF" id="PIRSF000386">
    <property type="entry name" value="tRNA_mtase"/>
    <property type="match status" value="1"/>
</dbReference>
<dbReference type="SUPFAM" id="SSF75217">
    <property type="entry name" value="alpha/beta knot"/>
    <property type="match status" value="1"/>
</dbReference>
<keyword id="KW-0963">Cytoplasm</keyword>
<keyword id="KW-0489">Methyltransferase</keyword>
<keyword id="KW-0949">S-adenosyl-L-methionine</keyword>
<keyword id="KW-0808">Transferase</keyword>
<keyword id="KW-0819">tRNA processing</keyword>
<feature type="chain" id="PRO_1000072640" description="tRNA (guanine-N(1)-)-methyltransferase">
    <location>
        <begin position="1"/>
        <end position="252"/>
    </location>
</feature>
<feature type="binding site" evidence="1">
    <location>
        <position position="118"/>
    </location>
    <ligand>
        <name>S-adenosyl-L-methionine</name>
        <dbReference type="ChEBI" id="CHEBI:59789"/>
    </ligand>
</feature>
<feature type="binding site" evidence="1">
    <location>
        <begin position="138"/>
        <end position="143"/>
    </location>
    <ligand>
        <name>S-adenosyl-L-methionine</name>
        <dbReference type="ChEBI" id="CHEBI:59789"/>
    </ligand>
</feature>
<comment type="function">
    <text evidence="1">Specifically methylates guanosine-37 in various tRNAs.</text>
</comment>
<comment type="catalytic activity">
    <reaction evidence="1">
        <text>guanosine(37) in tRNA + S-adenosyl-L-methionine = N(1)-methylguanosine(37) in tRNA + S-adenosyl-L-homocysteine + H(+)</text>
        <dbReference type="Rhea" id="RHEA:36899"/>
        <dbReference type="Rhea" id="RHEA-COMP:10145"/>
        <dbReference type="Rhea" id="RHEA-COMP:10147"/>
        <dbReference type="ChEBI" id="CHEBI:15378"/>
        <dbReference type="ChEBI" id="CHEBI:57856"/>
        <dbReference type="ChEBI" id="CHEBI:59789"/>
        <dbReference type="ChEBI" id="CHEBI:73542"/>
        <dbReference type="ChEBI" id="CHEBI:74269"/>
        <dbReference type="EC" id="2.1.1.228"/>
    </reaction>
</comment>
<comment type="subunit">
    <text evidence="1">Homodimer.</text>
</comment>
<comment type="subcellular location">
    <subcellularLocation>
        <location evidence="1">Cytoplasm</location>
    </subcellularLocation>
</comment>
<comment type="similarity">
    <text evidence="1">Belongs to the RNA methyltransferase TrmD family.</text>
</comment>
<sequence>MDKRLWVGVVSIFPEMFRAISDYGITSRAVKQGLLTLTCWNPRDYTEDRHQTVDDRPFGGGPGMVMKIKPLEGALADARQAAGGRKAKVIYLSPQGRQLTQAGVRELAEEEALILIAGRYEGIDERFIEEHVDEEWSIGDYVLSGGELPAMVLVDAVTRLLPGALGHADSAEEDSFTDGLLDCPHYTRPEVYADKRVPEVLLSGNHEHIRRWRLQQALGRTWERRADLLDSRSLSGEEQKLLAEYIRQRDDS</sequence>
<accession>A6V125</accession>
<name>TRMD_PSEP7</name>